<sequence length="108" mass="12005">MSGGSSRRYPPELRERAVRMVAEIRGQHDSEWAAISEVARLLGVGCAETVRKWVRQAQVDAGARPGTTTEESAELKRLRRDNAELRRANAILKTASAFFAAELDRPAR</sequence>
<evidence type="ECO:0000305" key="1"/>
<accession>P9WKH4</accession>
<accession>L0TBC3</accession>
<accession>O08121</accession>
<accession>O08155</accession>
<accession>O08157</accession>
<accession>O08158</accession>
<accession>O08265</accession>
<accession>P0C5G9</accession>
<accession>Q50686</accession>
<organism>
    <name type="scientific">Mycobacterium tuberculosis (strain CDC 1551 / Oshkosh)</name>
    <dbReference type="NCBI Taxonomy" id="83331"/>
    <lineage>
        <taxon>Bacteria</taxon>
        <taxon>Bacillati</taxon>
        <taxon>Actinomycetota</taxon>
        <taxon>Actinomycetes</taxon>
        <taxon>Mycobacteriales</taxon>
        <taxon>Mycobacteriaceae</taxon>
        <taxon>Mycobacterium</taxon>
        <taxon>Mycobacterium tuberculosis complex</taxon>
    </lineage>
</organism>
<protein>
    <recommendedName>
        <fullName>Insertion element IS6110 uncharacterized 12.0 kDa protein</fullName>
    </recommendedName>
</protein>
<name>YIA4_MYCTO</name>
<reference key="1">
    <citation type="journal article" date="2002" name="J. Bacteriol.">
        <title>Whole-genome comparison of Mycobacterium tuberculosis clinical and laboratory strains.</title>
        <authorList>
            <person name="Fleischmann R.D."/>
            <person name="Alland D."/>
            <person name="Eisen J.A."/>
            <person name="Carpenter L."/>
            <person name="White O."/>
            <person name="Peterson J.D."/>
            <person name="DeBoy R.T."/>
            <person name="Dodson R.J."/>
            <person name="Gwinn M.L."/>
            <person name="Haft D.H."/>
            <person name="Hickey E.K."/>
            <person name="Kolonay J.F."/>
            <person name="Nelson W.C."/>
            <person name="Umayam L.A."/>
            <person name="Ermolaeva M.D."/>
            <person name="Salzberg S.L."/>
            <person name="Delcher A."/>
            <person name="Utterback T.R."/>
            <person name="Weidman J.F."/>
            <person name="Khouri H.M."/>
            <person name="Gill J."/>
            <person name="Mikula A."/>
            <person name="Bishai W."/>
            <person name="Jacobs W.R. Jr."/>
            <person name="Venter J.C."/>
            <person name="Fraser C.M."/>
        </authorList>
    </citation>
    <scope>NUCLEOTIDE SEQUENCE [LARGE SCALE GENOMIC DNA]</scope>
    <source>
        <strain>CDC 1551 / Oshkosh</strain>
    </source>
</reference>
<proteinExistence type="inferred from homology"/>
<keyword id="KW-1185">Reference proteome</keyword>
<keyword id="KW-0814">Transposable element</keyword>
<comment type="similarity">
    <text evidence="1">Belongs to the transposase 8 family.</text>
</comment>
<feature type="chain" id="PRO_0000427653" description="Insertion element IS6110 uncharacterized 12.0 kDa protein">
    <location>
        <begin position="1"/>
        <end position="108"/>
    </location>
</feature>
<gene>
    <name type="ordered locus">MT1804</name>
</gene>
<gene>
    <name type="ordered locus">MT2882</name>
</gene>
<gene>
    <name type="ordered locus">MT0414</name>
</gene>
<gene>
    <name type="ordered locus">MT3099</name>
</gene>
<dbReference type="EMBL" id="AE000516">
    <property type="protein sequence ID" value="AAK44638.1"/>
    <property type="molecule type" value="Genomic_DNA"/>
</dbReference>
<dbReference type="EMBL" id="AE000516">
    <property type="protein sequence ID" value="AAK46077.1"/>
    <property type="molecule type" value="Genomic_DNA"/>
</dbReference>
<dbReference type="EMBL" id="AE000516">
    <property type="protein sequence ID" value="AAK47205.1"/>
    <property type="molecule type" value="Genomic_DNA"/>
</dbReference>
<dbReference type="EMBL" id="AE000516">
    <property type="protein sequence ID" value="AAK47428.1"/>
    <property type="molecule type" value="Genomic_DNA"/>
</dbReference>
<dbReference type="PIR" id="G70567">
    <property type="entry name" value="G70567"/>
</dbReference>
<dbReference type="SMR" id="P9WKH4"/>
<dbReference type="KEGG" id="mtc:MT0414"/>
<dbReference type="KEGG" id="mtc:MT1804"/>
<dbReference type="KEGG" id="mtc:MT2882"/>
<dbReference type="KEGG" id="mtc:MT3099"/>
<dbReference type="PATRIC" id="fig|83331.31.peg.1939"/>
<dbReference type="HOGENOM" id="CLU_027402_33_6_11"/>
<dbReference type="Proteomes" id="UP000001020">
    <property type="component" value="Chromosome"/>
</dbReference>
<dbReference type="GO" id="GO:0003677">
    <property type="term" value="F:DNA binding"/>
    <property type="evidence" value="ECO:0007669"/>
    <property type="project" value="InterPro"/>
</dbReference>
<dbReference type="GO" id="GO:0004803">
    <property type="term" value="F:transposase activity"/>
    <property type="evidence" value="ECO:0007669"/>
    <property type="project" value="InterPro"/>
</dbReference>
<dbReference type="GO" id="GO:0006313">
    <property type="term" value="P:DNA transposition"/>
    <property type="evidence" value="ECO:0007669"/>
    <property type="project" value="InterPro"/>
</dbReference>
<dbReference type="Gene3D" id="1.10.10.10">
    <property type="entry name" value="Winged helix-like DNA-binding domain superfamily/Winged helix DNA-binding domain"/>
    <property type="match status" value="1"/>
</dbReference>
<dbReference type="InterPro" id="IPR009057">
    <property type="entry name" value="Homeodomain-like_sf"/>
</dbReference>
<dbReference type="InterPro" id="IPR002514">
    <property type="entry name" value="Transposase_8"/>
</dbReference>
<dbReference type="InterPro" id="IPR036388">
    <property type="entry name" value="WH-like_DNA-bd_sf"/>
</dbReference>
<dbReference type="Pfam" id="PF01527">
    <property type="entry name" value="HTH_Tnp_1"/>
    <property type="match status" value="1"/>
</dbReference>
<dbReference type="SUPFAM" id="SSF46689">
    <property type="entry name" value="Homeodomain-like"/>
    <property type="match status" value="1"/>
</dbReference>